<proteinExistence type="evidence at protein level"/>
<name>PHSH_SOLTU</name>
<organism>
    <name type="scientific">Solanum tuberosum</name>
    <name type="common">Potato</name>
    <dbReference type="NCBI Taxonomy" id="4113"/>
    <lineage>
        <taxon>Eukaryota</taxon>
        <taxon>Viridiplantae</taxon>
        <taxon>Streptophyta</taxon>
        <taxon>Embryophyta</taxon>
        <taxon>Tracheophyta</taxon>
        <taxon>Spermatophyta</taxon>
        <taxon>Magnoliopsida</taxon>
        <taxon>eudicotyledons</taxon>
        <taxon>Gunneridae</taxon>
        <taxon>Pentapetalae</taxon>
        <taxon>asterids</taxon>
        <taxon>lamiids</taxon>
        <taxon>Solanales</taxon>
        <taxon>Solanaceae</taxon>
        <taxon>Solanoideae</taxon>
        <taxon>Solaneae</taxon>
        <taxon>Solanum</taxon>
    </lineage>
</organism>
<protein>
    <recommendedName>
        <fullName>Alpha-glucan phosphorylase, H isozyme</fullName>
        <ecNumber>2.4.1.1</ecNumber>
    </recommendedName>
    <alternativeName>
        <fullName>Starch phosphorylase H</fullName>
    </alternativeName>
</protein>
<keyword id="KW-0021">Allosteric enzyme</keyword>
<keyword id="KW-0119">Carbohydrate metabolism</keyword>
<keyword id="KW-0963">Cytoplasm</keyword>
<keyword id="KW-0903">Direct protein sequencing</keyword>
<keyword id="KW-0328">Glycosyltransferase</keyword>
<keyword id="KW-0663">Pyridoxal phosphate</keyword>
<keyword id="KW-1185">Reference proteome</keyword>
<keyword id="KW-0808">Transferase</keyword>
<dbReference type="EC" id="2.4.1.1"/>
<dbReference type="EMBL" id="M69038">
    <property type="protein sequence ID" value="AAA33809.1"/>
    <property type="molecule type" value="mRNA"/>
</dbReference>
<dbReference type="PIR" id="A40995">
    <property type="entry name" value="A40995"/>
</dbReference>
<dbReference type="RefSeq" id="NP_001275118.1">
    <property type="nucleotide sequence ID" value="NM_001288189.1"/>
</dbReference>
<dbReference type="SMR" id="P32811"/>
<dbReference type="FunCoup" id="P32811">
    <property type="interactions" value="1677"/>
</dbReference>
<dbReference type="STRING" id="4113.P32811"/>
<dbReference type="CAZy" id="GT35">
    <property type="family name" value="Glycosyltransferase Family 35"/>
</dbReference>
<dbReference type="GeneID" id="102577532"/>
<dbReference type="KEGG" id="sot:102577532"/>
<dbReference type="InParanoid" id="P32811"/>
<dbReference type="OrthoDB" id="9215500at2759"/>
<dbReference type="SABIO-RK" id="P32811"/>
<dbReference type="Proteomes" id="UP000011115">
    <property type="component" value="Unassembled WGS sequence"/>
</dbReference>
<dbReference type="ExpressionAtlas" id="P32811">
    <property type="expression patterns" value="baseline and differential"/>
</dbReference>
<dbReference type="GO" id="GO:0005737">
    <property type="term" value="C:cytoplasm"/>
    <property type="evidence" value="ECO:0000318"/>
    <property type="project" value="GO_Central"/>
</dbReference>
<dbReference type="GO" id="GO:0008184">
    <property type="term" value="F:glycogen phosphorylase activity"/>
    <property type="evidence" value="ECO:0000318"/>
    <property type="project" value="GO_Central"/>
</dbReference>
<dbReference type="GO" id="GO:0030170">
    <property type="term" value="F:pyridoxal phosphate binding"/>
    <property type="evidence" value="ECO:0000318"/>
    <property type="project" value="GO_Central"/>
</dbReference>
<dbReference type="GO" id="GO:0005980">
    <property type="term" value="P:glycogen catabolic process"/>
    <property type="evidence" value="ECO:0000318"/>
    <property type="project" value="GO_Central"/>
</dbReference>
<dbReference type="CDD" id="cd04300">
    <property type="entry name" value="GT35_Glycogen_Phosphorylase"/>
    <property type="match status" value="1"/>
</dbReference>
<dbReference type="FunFam" id="3.40.50.2000:FF:000003">
    <property type="entry name" value="Alpha-1,4 glucan phosphorylase"/>
    <property type="match status" value="1"/>
</dbReference>
<dbReference type="FunFam" id="3.40.50.2000:FF:000153">
    <property type="entry name" value="Alpha-1,4 glucan phosphorylase"/>
    <property type="match status" value="1"/>
</dbReference>
<dbReference type="Gene3D" id="3.40.50.2000">
    <property type="entry name" value="Glycogen Phosphorylase B"/>
    <property type="match status" value="2"/>
</dbReference>
<dbReference type="InterPro" id="IPR011833">
    <property type="entry name" value="Glycg_phsphrylas"/>
</dbReference>
<dbReference type="InterPro" id="IPR000811">
    <property type="entry name" value="Glyco_trans_35"/>
</dbReference>
<dbReference type="InterPro" id="IPR035090">
    <property type="entry name" value="Pyridoxal_P_attach_site"/>
</dbReference>
<dbReference type="NCBIfam" id="TIGR02093">
    <property type="entry name" value="P_ylase"/>
    <property type="match status" value="1"/>
</dbReference>
<dbReference type="PANTHER" id="PTHR11468:SF4">
    <property type="entry name" value="ALPHA-GLUCAN PHOSPHORYLASE 2, CYTOSOLIC"/>
    <property type="match status" value="1"/>
</dbReference>
<dbReference type="PANTHER" id="PTHR11468">
    <property type="entry name" value="GLYCOGEN PHOSPHORYLASE"/>
    <property type="match status" value="1"/>
</dbReference>
<dbReference type="Pfam" id="PF00343">
    <property type="entry name" value="Phosphorylase"/>
    <property type="match status" value="1"/>
</dbReference>
<dbReference type="PIRSF" id="PIRSF000460">
    <property type="entry name" value="Pprylas_GlgP"/>
    <property type="match status" value="1"/>
</dbReference>
<dbReference type="SUPFAM" id="SSF53756">
    <property type="entry name" value="UDP-Glycosyltransferase/glycogen phosphorylase"/>
    <property type="match status" value="1"/>
</dbReference>
<dbReference type="PROSITE" id="PS00102">
    <property type="entry name" value="PHOSPHORYLASE"/>
    <property type="match status" value="1"/>
</dbReference>
<reference key="1">
    <citation type="journal article" date="1991" name="J. Biol. Chem.">
        <title>Potato tuber type H phosphorylase isozyme. Molecular cloning, nucleotide sequence, and expression of a full-length cDNA in Escherichia coli.</title>
        <authorList>
            <person name="Mori H."/>
            <person name="Tanizawa K."/>
            <person name="Fukui T."/>
        </authorList>
    </citation>
    <scope>NUCLEOTIDE SEQUENCE [MRNA]</scope>
    <scope>PARTIAL PROTEIN SEQUENCE</scope>
</reference>
<sequence>MEGGAKSNDVSAAPIAQPLSEDPTDIASNIKYHAQYTPHFSPFKFEPLQAYYAATADSVRDRLIKQWNDTYLHYDKVNPKQTYYLSMEYLQGRALTNAVGNLDIHNAYADALNKLGQQLEEVVEQEKDAALGNGGLGRLASCFLDSMATLNLPAWGYGLRYRYGLFKQLITKAGQEEVPEDWLEKFSPWEIVRHDVVFPIRFFGHVEVLPSGSRKWVGGEVLQALAYDVPIPGYRTKNTNSLRLWEAKASSEDFNLFLFNDGQYDAAAQLHSRAQQICAVLYPGDATENGKLLRLKQQFFLCSASLQDIIARFKEREDGKGSHQWSEFPKKVAIQLNDTHPTLTIPELMRLLMDDEGLGWDESWNITTRTIAYTNHTVLPEALEKWSQAVMWKLLPRHMEIIEEIDKRFVATIMSERPDLENKMPSMRILDHNATKPVVHMANLCVVSSHTVNGVAQLHSDILKAELFADYVSVWPTKFQNKTNGITPRRWIRFCSPELSHIITKWLKTDQWVTNLELLANLREFADNSELHAEWESAKMANKQRLAQYILHVTGVSIDPNSLFDIQVKRIHEYKRQLLNILGVIYRYKKLKGMSPEERKNTTPRTVMIGGKAFATYTNAKRIVKLVTDVGDVVNSDPDVNDYLKVVFVPNYNVSVAEMLIPGSELSQHISTAGMEASGTSNMKFALNGCLIIGTLDGANVEIREEIGEDNFFLFGATADEVPQLRKDRENGLFKPDPRFEEAKQFIRSGAFGTYDYNPLLESLEGNSGYGRGDYFLVGHDFPSYMDAQARVDEAYKDRKRWIKMSILSTSGSGKFSSDRTISQYAKEIWNIAECRVP</sequence>
<comment type="function">
    <text>Phosphorylase is an important allosteric enzyme in carbohydrate metabolism. Enzymes from different sources differ in their regulatory mechanisms and in their natural substrates. However, all known phosphorylases share catalytic and structural properties.</text>
</comment>
<comment type="catalytic activity">
    <reaction>
        <text>[(1-&gt;4)-alpha-D-glucosyl](n) + phosphate = [(1-&gt;4)-alpha-D-glucosyl](n-1) + alpha-D-glucose 1-phosphate</text>
        <dbReference type="Rhea" id="RHEA:41732"/>
        <dbReference type="Rhea" id="RHEA-COMP:9584"/>
        <dbReference type="Rhea" id="RHEA-COMP:9586"/>
        <dbReference type="ChEBI" id="CHEBI:15444"/>
        <dbReference type="ChEBI" id="CHEBI:43474"/>
        <dbReference type="ChEBI" id="CHEBI:58601"/>
        <dbReference type="EC" id="2.4.1.1"/>
    </reaction>
</comment>
<comment type="cofactor">
    <cofactor>
        <name>pyridoxal 5'-phosphate</name>
        <dbReference type="ChEBI" id="CHEBI:597326"/>
    </cofactor>
</comment>
<comment type="subcellular location">
    <subcellularLocation>
        <location>Cytoplasm</location>
    </subcellularLocation>
</comment>
<comment type="similarity">
    <text evidence="3">Belongs to the glycogen phosphorylase family.</text>
</comment>
<accession>P32811</accession>
<feature type="chain" id="PRO_0000188542" description="Alpha-glucan phosphorylase, H isozyme">
    <location>
        <begin position="1"/>
        <end position="838"/>
    </location>
</feature>
<feature type="region of interest" description="Disordered" evidence="2">
    <location>
        <begin position="1"/>
        <end position="21"/>
    </location>
</feature>
<feature type="modified residue" description="N6-(pyridoxal phosphate)lysine" evidence="1">
    <location>
        <position position="684"/>
    </location>
</feature>
<evidence type="ECO:0000250" key="1"/>
<evidence type="ECO:0000256" key="2">
    <source>
        <dbReference type="SAM" id="MobiDB-lite"/>
    </source>
</evidence>
<evidence type="ECO:0000305" key="3"/>